<comment type="function">
    <text evidence="3">Odorant-binding protein required for hygrotaxis behavior in humidity-detecting sensilla.</text>
</comment>
<comment type="subcellular location">
    <subcellularLocation>
        <location evidence="3">Secreted</location>
    </subcellularLocation>
</comment>
<comment type="tissue specificity">
    <text evidence="3">Expressed in non-neuronal cells in hygrosensitive sensilla in the second chamber of the sacculus of the antenna third segment (at protein level).</text>
</comment>
<comment type="disruption phenotype">
    <text evidence="3">Viable with no morphological, mobility or chemosensory response defects (PubMed:30230472). Results in defective hygrotaxis behavior which might be related to increased desiccation resistance and overall longer lifespan (PubMed:30230472).</text>
</comment>
<comment type="similarity">
    <text evidence="4">Belongs to the PBP/GOBP family.</text>
</comment>
<reference evidence="7" key="1">
    <citation type="journal article" date="2000" name="Science">
        <title>The genome sequence of Drosophila melanogaster.</title>
        <authorList>
            <person name="Adams M.D."/>
            <person name="Celniker S.E."/>
            <person name="Holt R.A."/>
            <person name="Evans C.A."/>
            <person name="Gocayne J.D."/>
            <person name="Amanatides P.G."/>
            <person name="Scherer S.E."/>
            <person name="Li P.W."/>
            <person name="Hoskins R.A."/>
            <person name="Galle R.F."/>
            <person name="George R.A."/>
            <person name="Lewis S.E."/>
            <person name="Richards S."/>
            <person name="Ashburner M."/>
            <person name="Henderson S.N."/>
            <person name="Sutton G.G."/>
            <person name="Wortman J.R."/>
            <person name="Yandell M.D."/>
            <person name="Zhang Q."/>
            <person name="Chen L.X."/>
            <person name="Brandon R.C."/>
            <person name="Rogers Y.-H.C."/>
            <person name="Blazej R.G."/>
            <person name="Champe M."/>
            <person name="Pfeiffer B.D."/>
            <person name="Wan K.H."/>
            <person name="Doyle C."/>
            <person name="Baxter E.G."/>
            <person name="Helt G."/>
            <person name="Nelson C.R."/>
            <person name="Miklos G.L.G."/>
            <person name="Abril J.F."/>
            <person name="Agbayani A."/>
            <person name="An H.-J."/>
            <person name="Andrews-Pfannkoch C."/>
            <person name="Baldwin D."/>
            <person name="Ballew R.M."/>
            <person name="Basu A."/>
            <person name="Baxendale J."/>
            <person name="Bayraktaroglu L."/>
            <person name="Beasley E.M."/>
            <person name="Beeson K.Y."/>
            <person name="Benos P.V."/>
            <person name="Berman B.P."/>
            <person name="Bhandari D."/>
            <person name="Bolshakov S."/>
            <person name="Borkova D."/>
            <person name="Botchan M.R."/>
            <person name="Bouck J."/>
            <person name="Brokstein P."/>
            <person name="Brottier P."/>
            <person name="Burtis K.C."/>
            <person name="Busam D.A."/>
            <person name="Butler H."/>
            <person name="Cadieu E."/>
            <person name="Center A."/>
            <person name="Chandra I."/>
            <person name="Cherry J.M."/>
            <person name="Cawley S."/>
            <person name="Dahlke C."/>
            <person name="Davenport L.B."/>
            <person name="Davies P."/>
            <person name="de Pablos B."/>
            <person name="Delcher A."/>
            <person name="Deng Z."/>
            <person name="Mays A.D."/>
            <person name="Dew I."/>
            <person name="Dietz S.M."/>
            <person name="Dodson K."/>
            <person name="Doup L.E."/>
            <person name="Downes M."/>
            <person name="Dugan-Rocha S."/>
            <person name="Dunkov B.C."/>
            <person name="Dunn P."/>
            <person name="Durbin K.J."/>
            <person name="Evangelista C.C."/>
            <person name="Ferraz C."/>
            <person name="Ferriera S."/>
            <person name="Fleischmann W."/>
            <person name="Fosler C."/>
            <person name="Gabrielian A.E."/>
            <person name="Garg N.S."/>
            <person name="Gelbart W.M."/>
            <person name="Glasser K."/>
            <person name="Glodek A."/>
            <person name="Gong F."/>
            <person name="Gorrell J.H."/>
            <person name="Gu Z."/>
            <person name="Guan P."/>
            <person name="Harris M."/>
            <person name="Harris N.L."/>
            <person name="Harvey D.A."/>
            <person name="Heiman T.J."/>
            <person name="Hernandez J.R."/>
            <person name="Houck J."/>
            <person name="Hostin D."/>
            <person name="Houston K.A."/>
            <person name="Howland T.J."/>
            <person name="Wei M.-H."/>
            <person name="Ibegwam C."/>
            <person name="Jalali M."/>
            <person name="Kalush F."/>
            <person name="Karpen G.H."/>
            <person name="Ke Z."/>
            <person name="Kennison J.A."/>
            <person name="Ketchum K.A."/>
            <person name="Kimmel B.E."/>
            <person name="Kodira C.D."/>
            <person name="Kraft C.L."/>
            <person name="Kravitz S."/>
            <person name="Kulp D."/>
            <person name="Lai Z."/>
            <person name="Lasko P."/>
            <person name="Lei Y."/>
            <person name="Levitsky A.A."/>
            <person name="Li J.H."/>
            <person name="Li Z."/>
            <person name="Liang Y."/>
            <person name="Lin X."/>
            <person name="Liu X."/>
            <person name="Mattei B."/>
            <person name="McIntosh T.C."/>
            <person name="McLeod M.P."/>
            <person name="McPherson D."/>
            <person name="Merkulov G."/>
            <person name="Milshina N.V."/>
            <person name="Mobarry C."/>
            <person name="Morris J."/>
            <person name="Moshrefi A."/>
            <person name="Mount S.M."/>
            <person name="Moy M."/>
            <person name="Murphy B."/>
            <person name="Murphy L."/>
            <person name="Muzny D.M."/>
            <person name="Nelson D.L."/>
            <person name="Nelson D.R."/>
            <person name="Nelson K.A."/>
            <person name="Nixon K."/>
            <person name="Nusskern D.R."/>
            <person name="Pacleb J.M."/>
            <person name="Palazzolo M."/>
            <person name="Pittman G.S."/>
            <person name="Pan S."/>
            <person name="Pollard J."/>
            <person name="Puri V."/>
            <person name="Reese M.G."/>
            <person name="Reinert K."/>
            <person name="Remington K."/>
            <person name="Saunders R.D.C."/>
            <person name="Scheeler F."/>
            <person name="Shen H."/>
            <person name="Shue B.C."/>
            <person name="Siden-Kiamos I."/>
            <person name="Simpson M."/>
            <person name="Skupski M.P."/>
            <person name="Smith T.J."/>
            <person name="Spier E."/>
            <person name="Spradling A.C."/>
            <person name="Stapleton M."/>
            <person name="Strong R."/>
            <person name="Sun E."/>
            <person name="Svirskas R."/>
            <person name="Tector C."/>
            <person name="Turner R."/>
            <person name="Venter E."/>
            <person name="Wang A.H."/>
            <person name="Wang X."/>
            <person name="Wang Z.-Y."/>
            <person name="Wassarman D.A."/>
            <person name="Weinstock G.M."/>
            <person name="Weissenbach J."/>
            <person name="Williams S.M."/>
            <person name="Woodage T."/>
            <person name="Worley K.C."/>
            <person name="Wu D."/>
            <person name="Yang S."/>
            <person name="Yao Q.A."/>
            <person name="Ye J."/>
            <person name="Yeh R.-F."/>
            <person name="Zaveri J.S."/>
            <person name="Zhan M."/>
            <person name="Zhang G."/>
            <person name="Zhao Q."/>
            <person name="Zheng L."/>
            <person name="Zheng X.H."/>
            <person name="Zhong F.N."/>
            <person name="Zhong W."/>
            <person name="Zhou X."/>
            <person name="Zhu S.C."/>
            <person name="Zhu X."/>
            <person name="Smith H.O."/>
            <person name="Gibbs R.A."/>
            <person name="Myers E.W."/>
            <person name="Rubin G.M."/>
            <person name="Venter J.C."/>
        </authorList>
    </citation>
    <scope>NUCLEOTIDE SEQUENCE [LARGE SCALE GENOMIC DNA]</scope>
    <source>
        <strain evidence="7">Berkeley</strain>
    </source>
</reference>
<reference evidence="7" key="2">
    <citation type="journal article" date="2002" name="Genome Biol.">
        <title>Annotation of the Drosophila melanogaster euchromatic genome: a systematic review.</title>
        <authorList>
            <person name="Misra S."/>
            <person name="Crosby M.A."/>
            <person name="Mungall C.J."/>
            <person name="Matthews B.B."/>
            <person name="Campbell K.S."/>
            <person name="Hradecky P."/>
            <person name="Huang Y."/>
            <person name="Kaminker J.S."/>
            <person name="Millburn G.H."/>
            <person name="Prochnik S.E."/>
            <person name="Smith C.D."/>
            <person name="Tupy J.L."/>
            <person name="Whitfield E.J."/>
            <person name="Bayraktaroglu L."/>
            <person name="Berman B.P."/>
            <person name="Bettencourt B.R."/>
            <person name="Celniker S.E."/>
            <person name="de Grey A.D.N.J."/>
            <person name="Drysdale R.A."/>
            <person name="Harris N.L."/>
            <person name="Richter J."/>
            <person name="Russo S."/>
            <person name="Schroeder A.J."/>
            <person name="Shu S.Q."/>
            <person name="Stapleton M."/>
            <person name="Yamada C."/>
            <person name="Ashburner M."/>
            <person name="Gelbart W.M."/>
            <person name="Rubin G.M."/>
            <person name="Lewis S.E."/>
        </authorList>
    </citation>
    <scope>GENOME REANNOTATION</scope>
    <source>
        <strain evidence="7">Berkeley</strain>
    </source>
</reference>
<reference evidence="5" key="3">
    <citation type="submission" date="2006-01" db="EMBL/GenBank/DDBJ databases">
        <authorList>
            <person name="Stapleton M."/>
            <person name="Carlson J."/>
            <person name="Chavez C."/>
            <person name="Frise E."/>
            <person name="George R."/>
            <person name="Pacleb J."/>
            <person name="Park S."/>
            <person name="Wan K."/>
            <person name="Yu C."/>
            <person name="Celniker S."/>
        </authorList>
    </citation>
    <scope>NUCLEOTIDE SEQUENCE [LARGE SCALE MRNA] OF 4-202</scope>
    <source>
        <strain evidence="5">Berkeley</strain>
    </source>
</reference>
<reference evidence="4" key="4">
    <citation type="journal article" date="2018" name="Elife">
        <title>Humidity response depends on the small soluble protein Obp59a in Drosophila.</title>
        <authorList>
            <person name="Sun J.S."/>
            <person name="Larter N.K."/>
            <person name="Chahda J.S."/>
            <person name="Rioux D."/>
            <person name="Gumaste A."/>
            <person name="Carlson J.R."/>
        </authorList>
    </citation>
    <scope>FUNCTION</scope>
    <scope>SUBCELLULAR LOCATION</scope>
    <scope>TISSUE SPECIFICITY</scope>
    <scope>DISRUPTION PHENOTYPE</scope>
</reference>
<organism evidence="7">
    <name type="scientific">Drosophila melanogaster</name>
    <name type="common">Fruit fly</name>
    <dbReference type="NCBI Taxonomy" id="7227"/>
    <lineage>
        <taxon>Eukaryota</taxon>
        <taxon>Metazoa</taxon>
        <taxon>Ecdysozoa</taxon>
        <taxon>Arthropoda</taxon>
        <taxon>Hexapoda</taxon>
        <taxon>Insecta</taxon>
        <taxon>Pterygota</taxon>
        <taxon>Neoptera</taxon>
        <taxon>Endopterygota</taxon>
        <taxon>Diptera</taxon>
        <taxon>Brachycera</taxon>
        <taxon>Muscomorpha</taxon>
        <taxon>Ephydroidea</taxon>
        <taxon>Drosophilidae</taxon>
        <taxon>Drosophila</taxon>
        <taxon>Sophophora</taxon>
    </lineage>
</organism>
<protein>
    <recommendedName>
        <fullName evidence="6">Odorant-binding protein 59a</fullName>
    </recommendedName>
</protein>
<name>OB59A_DROME</name>
<keyword id="KW-0085">Behavior</keyword>
<keyword id="KW-1185">Reference proteome</keyword>
<keyword id="KW-0964">Secreted</keyword>
<keyword id="KW-0732">Signal</keyword>
<keyword id="KW-0765">Sulfation</keyword>
<evidence type="ECO:0000255" key="1"/>
<evidence type="ECO:0000256" key="2">
    <source>
        <dbReference type="SAM" id="MobiDB-lite"/>
    </source>
</evidence>
<evidence type="ECO:0000269" key="3">
    <source>
    </source>
</evidence>
<evidence type="ECO:0000305" key="4"/>
<evidence type="ECO:0000312" key="5">
    <source>
        <dbReference type="EMBL" id="ABC86503.1"/>
    </source>
</evidence>
<evidence type="ECO:0000312" key="6">
    <source>
        <dbReference type="FlyBase" id="FBgn0034766"/>
    </source>
</evidence>
<evidence type="ECO:0000312" key="7">
    <source>
        <dbReference type="Proteomes" id="UP000000803"/>
    </source>
</evidence>
<proteinExistence type="evidence at protein level"/>
<accession>Q86BF9</accession>
<accession>Q29QE9</accession>
<dbReference type="EMBL" id="AE013599">
    <property type="protein sequence ID" value="AAO41344.1"/>
    <property type="molecule type" value="Genomic_DNA"/>
</dbReference>
<dbReference type="EMBL" id="BT024441">
    <property type="protein sequence ID" value="ABC86503.1"/>
    <property type="molecule type" value="mRNA"/>
</dbReference>
<dbReference type="RefSeq" id="NP_788429.1">
    <property type="nucleotide sequence ID" value="NM_176249.3"/>
</dbReference>
<dbReference type="SMR" id="Q86BF9"/>
<dbReference type="FunCoup" id="Q86BF9">
    <property type="interactions" value="39"/>
</dbReference>
<dbReference type="STRING" id="7227.FBpp0071781"/>
<dbReference type="PaxDb" id="7227-FBpp0071781"/>
<dbReference type="EnsemblMetazoa" id="FBtr0071870">
    <property type="protein sequence ID" value="FBpp0071781"/>
    <property type="gene ID" value="FBgn0034766"/>
</dbReference>
<dbReference type="GeneID" id="37605"/>
<dbReference type="KEGG" id="dme:Dmel_CG13517"/>
<dbReference type="UCSC" id="CG13517-RB">
    <property type="organism name" value="d. melanogaster"/>
</dbReference>
<dbReference type="AGR" id="FB:FBgn0034766"/>
<dbReference type="CTD" id="37605"/>
<dbReference type="FlyBase" id="FBgn0034766">
    <property type="gene designation" value="Obp59a"/>
</dbReference>
<dbReference type="VEuPathDB" id="VectorBase:FBgn0034766"/>
<dbReference type="eggNOG" id="ENOG502SBM2">
    <property type="taxonomic scope" value="Eukaryota"/>
</dbReference>
<dbReference type="HOGENOM" id="CLU_119225_0_0_1"/>
<dbReference type="InParanoid" id="Q86BF9"/>
<dbReference type="OMA" id="QCVAQCF"/>
<dbReference type="OrthoDB" id="8194482at2759"/>
<dbReference type="PhylomeDB" id="Q86BF9"/>
<dbReference type="BioGRID-ORCS" id="37605">
    <property type="hits" value="0 hits in 1 CRISPR screen"/>
</dbReference>
<dbReference type="GenomeRNAi" id="37605"/>
<dbReference type="PRO" id="PR:Q86BF9"/>
<dbReference type="Proteomes" id="UP000000803">
    <property type="component" value="Chromosome 2R"/>
</dbReference>
<dbReference type="Bgee" id="FBgn0034766">
    <property type="expression patterns" value="Expressed in adult olfactory receptor neuron Or65 (Drosophila) in antenna and 29 other cell types or tissues"/>
</dbReference>
<dbReference type="GO" id="GO:0005576">
    <property type="term" value="C:extracellular region"/>
    <property type="evidence" value="ECO:0000255"/>
    <property type="project" value="FlyBase"/>
</dbReference>
<dbReference type="GO" id="GO:0005549">
    <property type="term" value="F:odorant binding"/>
    <property type="evidence" value="ECO:0000250"/>
    <property type="project" value="FlyBase"/>
</dbReference>
<dbReference type="GO" id="GO:0090547">
    <property type="term" value="P:response to low humidity"/>
    <property type="evidence" value="ECO:0000315"/>
    <property type="project" value="FlyBase"/>
</dbReference>
<dbReference type="GO" id="GO:0007606">
    <property type="term" value="P:sensory perception of chemical stimulus"/>
    <property type="evidence" value="ECO:0000250"/>
    <property type="project" value="FlyBase"/>
</dbReference>
<dbReference type="FunFam" id="1.10.238.20:FF:000017">
    <property type="entry name" value="Odorant-binding protein 59a"/>
    <property type="match status" value="1"/>
</dbReference>
<dbReference type="Gene3D" id="1.10.238.20">
    <property type="entry name" value="Pheromone/general odorant binding protein domain"/>
    <property type="match status" value="1"/>
</dbReference>
<dbReference type="InterPro" id="IPR052295">
    <property type="entry name" value="Odorant-binding_protein"/>
</dbReference>
<dbReference type="InterPro" id="IPR006170">
    <property type="entry name" value="PBP/GOBP"/>
</dbReference>
<dbReference type="InterPro" id="IPR036728">
    <property type="entry name" value="PBP_GOBP_sf"/>
</dbReference>
<dbReference type="PANTHER" id="PTHR21066:SF9">
    <property type="entry name" value="ODORANT-BINDING PROTEIN 59A"/>
    <property type="match status" value="1"/>
</dbReference>
<dbReference type="PANTHER" id="PTHR21066">
    <property type="entry name" value="ODORANT-BINDING PROTEIN 59A-RELATED"/>
    <property type="match status" value="1"/>
</dbReference>
<dbReference type="Pfam" id="PF01395">
    <property type="entry name" value="PBP_GOBP"/>
    <property type="match status" value="1"/>
</dbReference>
<dbReference type="SUPFAM" id="SSF47565">
    <property type="entry name" value="Insect pheromone/odorant-binding proteins"/>
    <property type="match status" value="1"/>
</dbReference>
<gene>
    <name evidence="6" type="primary">Obp59a</name>
    <name evidence="6" type="synonym">Obp58a</name>
    <name evidence="6" type="ORF">CG13517</name>
</gene>
<feature type="signal peptide" evidence="1">
    <location>
        <begin position="1"/>
        <end position="20"/>
    </location>
</feature>
<feature type="chain" id="PRO_5004302281" description="Odorant-binding protein 59a" evidence="1">
    <location>
        <begin position="21"/>
        <end position="202"/>
    </location>
</feature>
<feature type="region of interest" description="Disordered" evidence="2">
    <location>
        <begin position="43"/>
        <end position="105"/>
    </location>
</feature>
<feature type="compositionally biased region" description="Basic and acidic residues" evidence="2">
    <location>
        <begin position="43"/>
        <end position="53"/>
    </location>
</feature>
<feature type="compositionally biased region" description="Gly residues" evidence="2">
    <location>
        <begin position="54"/>
        <end position="65"/>
    </location>
</feature>
<sequence length="202" mass="23361">MKQLIFLLICLSCGTCSIYALKCRSQEGLSEAELKRTVRNCMHRQDEDEDRGRGGQGRQGNGYEYGYGMDHDQEEQDRNPGNRGGYGNRRQRGLRQSDGRNHTSNDGGQCVAQCFFEEMNMVDGNGMPDRRKVSYLLTKDLRDRELRNFFTDTVQQCFRYLESNGRGRHHKCSAARELVKCMSEYAKAQCEDWEEHGNMLFN</sequence>